<gene>
    <name evidence="1" type="primary">pyrF</name>
    <name type="ordered locus">PMT9312_1426</name>
</gene>
<reference key="1">
    <citation type="journal article" date="2006" name="Science">
        <title>Genomic islands and the ecology and evolution of Prochlorococcus.</title>
        <authorList>
            <person name="Coleman M.L."/>
            <person name="Sullivan M.B."/>
            <person name="Martiny A.C."/>
            <person name="Steglich C."/>
            <person name="Barry K."/>
            <person name="Delong E.F."/>
            <person name="Chisholm S.W."/>
        </authorList>
    </citation>
    <scope>NUCLEOTIDE SEQUENCE [LARGE SCALE GENOMIC DNA]</scope>
    <source>
        <strain>MIT 9312</strain>
    </source>
</reference>
<organism>
    <name type="scientific">Prochlorococcus marinus (strain MIT 9312)</name>
    <dbReference type="NCBI Taxonomy" id="74546"/>
    <lineage>
        <taxon>Bacteria</taxon>
        <taxon>Bacillati</taxon>
        <taxon>Cyanobacteriota</taxon>
        <taxon>Cyanophyceae</taxon>
        <taxon>Synechococcales</taxon>
        <taxon>Prochlorococcaceae</taxon>
        <taxon>Prochlorococcus</taxon>
    </lineage>
</organism>
<comment type="function">
    <text evidence="1">Catalyzes the decarboxylation of orotidine 5'-monophosphate (OMP) to uridine 5'-monophosphate (UMP).</text>
</comment>
<comment type="catalytic activity">
    <reaction evidence="1">
        <text>orotidine 5'-phosphate + H(+) = UMP + CO2</text>
        <dbReference type="Rhea" id="RHEA:11596"/>
        <dbReference type="ChEBI" id="CHEBI:15378"/>
        <dbReference type="ChEBI" id="CHEBI:16526"/>
        <dbReference type="ChEBI" id="CHEBI:57538"/>
        <dbReference type="ChEBI" id="CHEBI:57865"/>
        <dbReference type="EC" id="4.1.1.23"/>
    </reaction>
</comment>
<comment type="pathway">
    <text evidence="1">Pyrimidine metabolism; UMP biosynthesis via de novo pathway; UMP from orotate: step 2/2.</text>
</comment>
<comment type="subunit">
    <text evidence="1">Homodimer.</text>
</comment>
<comment type="similarity">
    <text evidence="1">Belongs to the OMP decarboxylase family. Type 1 subfamily.</text>
</comment>
<name>PYRF_PROM9</name>
<dbReference type="EC" id="4.1.1.23" evidence="1"/>
<dbReference type="EMBL" id="CP000111">
    <property type="protein sequence ID" value="ABB50486.1"/>
    <property type="molecule type" value="Genomic_DNA"/>
</dbReference>
<dbReference type="RefSeq" id="WP_011376970.1">
    <property type="nucleotide sequence ID" value="NC_007577.1"/>
</dbReference>
<dbReference type="SMR" id="Q319F9"/>
<dbReference type="STRING" id="74546.PMT9312_1426"/>
<dbReference type="KEGG" id="pmi:PMT9312_1426"/>
<dbReference type="eggNOG" id="COG0284">
    <property type="taxonomic scope" value="Bacteria"/>
</dbReference>
<dbReference type="HOGENOM" id="CLU_067069_1_0_3"/>
<dbReference type="OrthoDB" id="9806203at2"/>
<dbReference type="UniPathway" id="UPA00070">
    <property type="reaction ID" value="UER00120"/>
</dbReference>
<dbReference type="Proteomes" id="UP000002715">
    <property type="component" value="Chromosome"/>
</dbReference>
<dbReference type="GO" id="GO:0005829">
    <property type="term" value="C:cytosol"/>
    <property type="evidence" value="ECO:0007669"/>
    <property type="project" value="TreeGrafter"/>
</dbReference>
<dbReference type="GO" id="GO:0004590">
    <property type="term" value="F:orotidine-5'-phosphate decarboxylase activity"/>
    <property type="evidence" value="ECO:0007669"/>
    <property type="project" value="UniProtKB-UniRule"/>
</dbReference>
<dbReference type="GO" id="GO:0006207">
    <property type="term" value="P:'de novo' pyrimidine nucleobase biosynthetic process"/>
    <property type="evidence" value="ECO:0007669"/>
    <property type="project" value="InterPro"/>
</dbReference>
<dbReference type="GO" id="GO:0044205">
    <property type="term" value="P:'de novo' UMP biosynthetic process"/>
    <property type="evidence" value="ECO:0007669"/>
    <property type="project" value="UniProtKB-UniRule"/>
</dbReference>
<dbReference type="CDD" id="cd04725">
    <property type="entry name" value="OMP_decarboxylase_like"/>
    <property type="match status" value="1"/>
</dbReference>
<dbReference type="Gene3D" id="3.20.20.70">
    <property type="entry name" value="Aldolase class I"/>
    <property type="match status" value="1"/>
</dbReference>
<dbReference type="HAMAP" id="MF_01200_B">
    <property type="entry name" value="OMPdecase_type1_B"/>
    <property type="match status" value="1"/>
</dbReference>
<dbReference type="InterPro" id="IPR013785">
    <property type="entry name" value="Aldolase_TIM"/>
</dbReference>
<dbReference type="InterPro" id="IPR014732">
    <property type="entry name" value="OMPdecase"/>
</dbReference>
<dbReference type="InterPro" id="IPR018089">
    <property type="entry name" value="OMPdecase_AS"/>
</dbReference>
<dbReference type="InterPro" id="IPR047596">
    <property type="entry name" value="OMPdecase_bac"/>
</dbReference>
<dbReference type="InterPro" id="IPR001754">
    <property type="entry name" value="OMPdeCOase_dom"/>
</dbReference>
<dbReference type="InterPro" id="IPR011060">
    <property type="entry name" value="RibuloseP-bd_barrel"/>
</dbReference>
<dbReference type="NCBIfam" id="NF001273">
    <property type="entry name" value="PRK00230.1"/>
    <property type="match status" value="1"/>
</dbReference>
<dbReference type="NCBIfam" id="TIGR01740">
    <property type="entry name" value="pyrF"/>
    <property type="match status" value="1"/>
</dbReference>
<dbReference type="PANTHER" id="PTHR32119">
    <property type="entry name" value="OROTIDINE 5'-PHOSPHATE DECARBOXYLASE"/>
    <property type="match status" value="1"/>
</dbReference>
<dbReference type="PANTHER" id="PTHR32119:SF2">
    <property type="entry name" value="OROTIDINE 5'-PHOSPHATE DECARBOXYLASE"/>
    <property type="match status" value="1"/>
</dbReference>
<dbReference type="Pfam" id="PF00215">
    <property type="entry name" value="OMPdecase"/>
    <property type="match status" value="1"/>
</dbReference>
<dbReference type="SMART" id="SM00934">
    <property type="entry name" value="OMPdecase"/>
    <property type="match status" value="1"/>
</dbReference>
<dbReference type="SUPFAM" id="SSF51366">
    <property type="entry name" value="Ribulose-phoshate binding barrel"/>
    <property type="match status" value="1"/>
</dbReference>
<dbReference type="PROSITE" id="PS00156">
    <property type="entry name" value="OMPDECASE"/>
    <property type="match status" value="1"/>
</dbReference>
<proteinExistence type="inferred from homology"/>
<accession>Q319F9</accession>
<feature type="chain" id="PRO_0000241885" description="Orotidine 5'-phosphate decarboxylase">
    <location>
        <begin position="1"/>
        <end position="242"/>
    </location>
</feature>
<feature type="active site" description="Proton donor" evidence="1">
    <location>
        <position position="66"/>
    </location>
</feature>
<feature type="binding site" evidence="1">
    <location>
        <position position="16"/>
    </location>
    <ligand>
        <name>substrate</name>
    </ligand>
</feature>
<feature type="binding site" evidence="1">
    <location>
        <position position="37"/>
    </location>
    <ligand>
        <name>substrate</name>
    </ligand>
</feature>
<feature type="binding site" evidence="1">
    <location>
        <begin position="64"/>
        <end position="73"/>
    </location>
    <ligand>
        <name>substrate</name>
    </ligand>
</feature>
<feature type="binding site" evidence="1">
    <location>
        <position position="128"/>
    </location>
    <ligand>
        <name>substrate</name>
    </ligand>
</feature>
<feature type="binding site" evidence="1">
    <location>
        <position position="190"/>
    </location>
    <ligand>
        <name>substrate</name>
    </ligand>
</feature>
<feature type="binding site" evidence="1">
    <location>
        <position position="199"/>
    </location>
    <ligand>
        <name>substrate</name>
    </ligand>
</feature>
<feature type="binding site" evidence="1">
    <location>
        <position position="219"/>
    </location>
    <ligand>
        <name>substrate</name>
    </ligand>
</feature>
<feature type="binding site" evidence="1">
    <location>
        <position position="220"/>
    </location>
    <ligand>
        <name>substrate</name>
    </ligand>
</feature>
<protein>
    <recommendedName>
        <fullName evidence="1">Orotidine 5'-phosphate decarboxylase</fullName>
        <ecNumber evidence="1">4.1.1.23</ecNumber>
    </recommendedName>
    <alternativeName>
        <fullName evidence="1">OMP decarboxylase</fullName>
        <shortName evidence="1">OMPDCase</shortName>
        <shortName evidence="1">OMPdecase</shortName>
    </alternativeName>
</protein>
<keyword id="KW-0210">Decarboxylase</keyword>
<keyword id="KW-0456">Lyase</keyword>
<keyword id="KW-0665">Pyrimidine biosynthesis</keyword>
<evidence type="ECO:0000255" key="1">
    <source>
        <dbReference type="HAMAP-Rule" id="MF_01200"/>
    </source>
</evidence>
<sequence length="242" mass="26870">MKNRFNSEDKIILAIDGLDLNQAKLLLEKCPSIKWVKVGLELFVREGPRVVEILKGLNKKIFLDLKFHDIPNTMSAACFQVSKLGVDIISVHSSAGLKALQDSKKASLEGASLANLKPPFVVGITVLTSFSLKDFQTDLDRKNSIEDNVLRLAKLSFDAELDGCVCSPWEVKMLRSIYKNNFELITPGIRLKIDNKDDQNRIMTPNEAIDNGASKLVIGRSISKALDPNKALIEIFKSIDSD</sequence>